<reference key="1">
    <citation type="journal article" date="2008" name="Appl. Environ. Microbiol.">
        <title>The genome of Polaromonas sp. strain JS666: insights into the evolution of a hydrocarbon- and xenobiotic-degrading bacterium, and features of relevance to biotechnology.</title>
        <authorList>
            <person name="Mattes T.E."/>
            <person name="Alexander A.K."/>
            <person name="Richardson P.M."/>
            <person name="Munk A.C."/>
            <person name="Han C.S."/>
            <person name="Stothard P."/>
            <person name="Coleman N.V."/>
        </authorList>
    </citation>
    <scope>NUCLEOTIDE SEQUENCE [LARGE SCALE GENOMIC DNA]</scope>
    <source>
        <strain>JS666 / ATCC BAA-500</strain>
    </source>
</reference>
<evidence type="ECO:0000255" key="1">
    <source>
        <dbReference type="HAMAP-Rule" id="MF_01152"/>
    </source>
</evidence>
<evidence type="ECO:0000256" key="2">
    <source>
        <dbReference type="SAM" id="MobiDB-lite"/>
    </source>
</evidence>
<name>DNAJ_POLSJ</name>
<feature type="chain" id="PRO_1000085245" description="Chaperone protein DnaJ">
    <location>
        <begin position="1"/>
        <end position="380"/>
    </location>
</feature>
<feature type="domain" description="J" evidence="1">
    <location>
        <begin position="5"/>
        <end position="72"/>
    </location>
</feature>
<feature type="repeat" description="CXXCXGXG motif">
    <location>
        <begin position="152"/>
        <end position="159"/>
    </location>
</feature>
<feature type="repeat" description="CXXCXGXG motif">
    <location>
        <begin position="169"/>
        <end position="176"/>
    </location>
</feature>
<feature type="repeat" description="CXXCXGXG motif">
    <location>
        <begin position="191"/>
        <end position="198"/>
    </location>
</feature>
<feature type="repeat" description="CXXCXGXG motif">
    <location>
        <begin position="205"/>
        <end position="212"/>
    </location>
</feature>
<feature type="zinc finger region" description="CR-type" evidence="1">
    <location>
        <begin position="139"/>
        <end position="217"/>
    </location>
</feature>
<feature type="region of interest" description="Disordered" evidence="2">
    <location>
        <begin position="1"/>
        <end position="48"/>
    </location>
</feature>
<feature type="region of interest" description="Disordered" evidence="2">
    <location>
        <begin position="357"/>
        <end position="380"/>
    </location>
</feature>
<feature type="compositionally biased region" description="Basic residues" evidence="2">
    <location>
        <begin position="24"/>
        <end position="34"/>
    </location>
</feature>
<feature type="compositionally biased region" description="Basic and acidic residues" evidence="2">
    <location>
        <begin position="35"/>
        <end position="48"/>
    </location>
</feature>
<feature type="compositionally biased region" description="Basic and acidic residues" evidence="2">
    <location>
        <begin position="364"/>
        <end position="380"/>
    </location>
</feature>
<feature type="binding site" evidence="1">
    <location>
        <position position="152"/>
    </location>
    <ligand>
        <name>Zn(2+)</name>
        <dbReference type="ChEBI" id="CHEBI:29105"/>
        <label>1</label>
    </ligand>
</feature>
<feature type="binding site" evidence="1">
    <location>
        <position position="155"/>
    </location>
    <ligand>
        <name>Zn(2+)</name>
        <dbReference type="ChEBI" id="CHEBI:29105"/>
        <label>1</label>
    </ligand>
</feature>
<feature type="binding site" evidence="1">
    <location>
        <position position="169"/>
    </location>
    <ligand>
        <name>Zn(2+)</name>
        <dbReference type="ChEBI" id="CHEBI:29105"/>
        <label>2</label>
    </ligand>
</feature>
<feature type="binding site" evidence="1">
    <location>
        <position position="172"/>
    </location>
    <ligand>
        <name>Zn(2+)</name>
        <dbReference type="ChEBI" id="CHEBI:29105"/>
        <label>2</label>
    </ligand>
</feature>
<feature type="binding site" evidence="1">
    <location>
        <position position="191"/>
    </location>
    <ligand>
        <name>Zn(2+)</name>
        <dbReference type="ChEBI" id="CHEBI:29105"/>
        <label>2</label>
    </ligand>
</feature>
<feature type="binding site" evidence="1">
    <location>
        <position position="194"/>
    </location>
    <ligand>
        <name>Zn(2+)</name>
        <dbReference type="ChEBI" id="CHEBI:29105"/>
        <label>2</label>
    </ligand>
</feature>
<feature type="binding site" evidence="1">
    <location>
        <position position="205"/>
    </location>
    <ligand>
        <name>Zn(2+)</name>
        <dbReference type="ChEBI" id="CHEBI:29105"/>
        <label>1</label>
    </ligand>
</feature>
<feature type="binding site" evidence="1">
    <location>
        <position position="208"/>
    </location>
    <ligand>
        <name>Zn(2+)</name>
        <dbReference type="ChEBI" id="CHEBI:29105"/>
        <label>1</label>
    </ligand>
</feature>
<protein>
    <recommendedName>
        <fullName evidence="1">Chaperone protein DnaJ</fullName>
    </recommendedName>
</protein>
<sequence>MAKKDYYDTLGVPKNASDDDIKKAYRKLAMKHHPDRNQGDKSKVSEEKFKEAKEAYEVLSDENKRMAYDQYGHAGVDPNMRGGGPGAEGFGGFAEAFGDIFGDVFGGQRGGQQRGGRQVYRGGDLSYAMEITLEEAAHGKEAQIRIPSWDDCNTCHGSGAKPGTKVVTCTTCHGHGVVQMRQGFFSVQQTCPQCKGTGKLIPEPCVACHGVGKTKNNKTLEVKIPAGIDDGMRIRSTGNGEPGTNGGPPGDLYIEIRIKKHEIFERDGDDLHCAVPISFTTAALGGEIEVPTLAGKAAIDIPEGTQAAKQFRLRGKGIKGVRSSYPGDLYCHITVETPVKLTEHQRKLLKELDESLKKGGARHSPSEEGWADKLKSFFSA</sequence>
<gene>
    <name evidence="1" type="primary">dnaJ</name>
    <name type="ordered locus">Bpro_3127</name>
</gene>
<dbReference type="EMBL" id="CP000316">
    <property type="protein sequence ID" value="ABE45041.1"/>
    <property type="molecule type" value="Genomic_DNA"/>
</dbReference>
<dbReference type="RefSeq" id="WP_011484036.1">
    <property type="nucleotide sequence ID" value="NC_007948.1"/>
</dbReference>
<dbReference type="SMR" id="Q128K1"/>
<dbReference type="STRING" id="296591.Bpro_3127"/>
<dbReference type="KEGG" id="pol:Bpro_3127"/>
<dbReference type="eggNOG" id="COG0484">
    <property type="taxonomic scope" value="Bacteria"/>
</dbReference>
<dbReference type="HOGENOM" id="CLU_017633_0_7_4"/>
<dbReference type="OrthoDB" id="9779889at2"/>
<dbReference type="Proteomes" id="UP000001983">
    <property type="component" value="Chromosome"/>
</dbReference>
<dbReference type="GO" id="GO:0005737">
    <property type="term" value="C:cytoplasm"/>
    <property type="evidence" value="ECO:0007669"/>
    <property type="project" value="UniProtKB-SubCell"/>
</dbReference>
<dbReference type="GO" id="GO:0005524">
    <property type="term" value="F:ATP binding"/>
    <property type="evidence" value="ECO:0007669"/>
    <property type="project" value="InterPro"/>
</dbReference>
<dbReference type="GO" id="GO:0031072">
    <property type="term" value="F:heat shock protein binding"/>
    <property type="evidence" value="ECO:0007669"/>
    <property type="project" value="InterPro"/>
</dbReference>
<dbReference type="GO" id="GO:0051082">
    <property type="term" value="F:unfolded protein binding"/>
    <property type="evidence" value="ECO:0007669"/>
    <property type="project" value="UniProtKB-UniRule"/>
</dbReference>
<dbReference type="GO" id="GO:0008270">
    <property type="term" value="F:zinc ion binding"/>
    <property type="evidence" value="ECO:0007669"/>
    <property type="project" value="UniProtKB-UniRule"/>
</dbReference>
<dbReference type="GO" id="GO:0051085">
    <property type="term" value="P:chaperone cofactor-dependent protein refolding"/>
    <property type="evidence" value="ECO:0007669"/>
    <property type="project" value="TreeGrafter"/>
</dbReference>
<dbReference type="GO" id="GO:0006260">
    <property type="term" value="P:DNA replication"/>
    <property type="evidence" value="ECO:0007669"/>
    <property type="project" value="UniProtKB-KW"/>
</dbReference>
<dbReference type="GO" id="GO:0042026">
    <property type="term" value="P:protein refolding"/>
    <property type="evidence" value="ECO:0007669"/>
    <property type="project" value="TreeGrafter"/>
</dbReference>
<dbReference type="GO" id="GO:0009408">
    <property type="term" value="P:response to heat"/>
    <property type="evidence" value="ECO:0007669"/>
    <property type="project" value="InterPro"/>
</dbReference>
<dbReference type="CDD" id="cd06257">
    <property type="entry name" value="DnaJ"/>
    <property type="match status" value="1"/>
</dbReference>
<dbReference type="CDD" id="cd10747">
    <property type="entry name" value="DnaJ_C"/>
    <property type="match status" value="1"/>
</dbReference>
<dbReference type="CDD" id="cd10719">
    <property type="entry name" value="DnaJ_zf"/>
    <property type="match status" value="1"/>
</dbReference>
<dbReference type="FunFam" id="1.10.287.110:FF:000034">
    <property type="entry name" value="Chaperone protein DnaJ"/>
    <property type="match status" value="1"/>
</dbReference>
<dbReference type="FunFam" id="2.10.230.10:FF:000002">
    <property type="entry name" value="Molecular chaperone DnaJ"/>
    <property type="match status" value="1"/>
</dbReference>
<dbReference type="FunFam" id="2.60.260.20:FF:000004">
    <property type="entry name" value="Molecular chaperone DnaJ"/>
    <property type="match status" value="1"/>
</dbReference>
<dbReference type="Gene3D" id="1.10.287.110">
    <property type="entry name" value="DnaJ domain"/>
    <property type="match status" value="1"/>
</dbReference>
<dbReference type="Gene3D" id="2.10.230.10">
    <property type="entry name" value="Heat shock protein DnaJ, cysteine-rich domain"/>
    <property type="match status" value="1"/>
</dbReference>
<dbReference type="Gene3D" id="2.60.260.20">
    <property type="entry name" value="Urease metallochaperone UreE, N-terminal domain"/>
    <property type="match status" value="2"/>
</dbReference>
<dbReference type="HAMAP" id="MF_01152">
    <property type="entry name" value="DnaJ"/>
    <property type="match status" value="1"/>
</dbReference>
<dbReference type="InterPro" id="IPR012724">
    <property type="entry name" value="DnaJ"/>
</dbReference>
<dbReference type="InterPro" id="IPR002939">
    <property type="entry name" value="DnaJ_C"/>
</dbReference>
<dbReference type="InterPro" id="IPR001623">
    <property type="entry name" value="DnaJ_domain"/>
</dbReference>
<dbReference type="InterPro" id="IPR018253">
    <property type="entry name" value="DnaJ_domain_CS"/>
</dbReference>
<dbReference type="InterPro" id="IPR008971">
    <property type="entry name" value="HSP40/DnaJ_pept-bd"/>
</dbReference>
<dbReference type="InterPro" id="IPR001305">
    <property type="entry name" value="HSP_DnaJ_Cys-rich_dom"/>
</dbReference>
<dbReference type="InterPro" id="IPR036410">
    <property type="entry name" value="HSP_DnaJ_Cys-rich_dom_sf"/>
</dbReference>
<dbReference type="InterPro" id="IPR036869">
    <property type="entry name" value="J_dom_sf"/>
</dbReference>
<dbReference type="NCBIfam" id="TIGR02349">
    <property type="entry name" value="DnaJ_bact"/>
    <property type="match status" value="1"/>
</dbReference>
<dbReference type="NCBIfam" id="NF008035">
    <property type="entry name" value="PRK10767.1"/>
    <property type="match status" value="1"/>
</dbReference>
<dbReference type="PANTHER" id="PTHR43096:SF48">
    <property type="entry name" value="CHAPERONE PROTEIN DNAJ"/>
    <property type="match status" value="1"/>
</dbReference>
<dbReference type="PANTHER" id="PTHR43096">
    <property type="entry name" value="DNAJ HOMOLOG 1, MITOCHONDRIAL-RELATED"/>
    <property type="match status" value="1"/>
</dbReference>
<dbReference type="Pfam" id="PF00226">
    <property type="entry name" value="DnaJ"/>
    <property type="match status" value="1"/>
</dbReference>
<dbReference type="Pfam" id="PF01556">
    <property type="entry name" value="DnaJ_C"/>
    <property type="match status" value="1"/>
</dbReference>
<dbReference type="Pfam" id="PF00684">
    <property type="entry name" value="DnaJ_CXXCXGXG"/>
    <property type="match status" value="1"/>
</dbReference>
<dbReference type="PRINTS" id="PR00625">
    <property type="entry name" value="JDOMAIN"/>
</dbReference>
<dbReference type="SMART" id="SM00271">
    <property type="entry name" value="DnaJ"/>
    <property type="match status" value="1"/>
</dbReference>
<dbReference type="SUPFAM" id="SSF46565">
    <property type="entry name" value="Chaperone J-domain"/>
    <property type="match status" value="1"/>
</dbReference>
<dbReference type="SUPFAM" id="SSF57938">
    <property type="entry name" value="DnaJ/Hsp40 cysteine-rich domain"/>
    <property type="match status" value="1"/>
</dbReference>
<dbReference type="SUPFAM" id="SSF49493">
    <property type="entry name" value="HSP40/DnaJ peptide-binding domain"/>
    <property type="match status" value="2"/>
</dbReference>
<dbReference type="PROSITE" id="PS00636">
    <property type="entry name" value="DNAJ_1"/>
    <property type="match status" value="1"/>
</dbReference>
<dbReference type="PROSITE" id="PS50076">
    <property type="entry name" value="DNAJ_2"/>
    <property type="match status" value="1"/>
</dbReference>
<dbReference type="PROSITE" id="PS51188">
    <property type="entry name" value="ZF_CR"/>
    <property type="match status" value="1"/>
</dbReference>
<accession>Q128K1</accession>
<keyword id="KW-0143">Chaperone</keyword>
<keyword id="KW-0963">Cytoplasm</keyword>
<keyword id="KW-0235">DNA replication</keyword>
<keyword id="KW-0479">Metal-binding</keyword>
<keyword id="KW-1185">Reference proteome</keyword>
<keyword id="KW-0677">Repeat</keyword>
<keyword id="KW-0346">Stress response</keyword>
<keyword id="KW-0862">Zinc</keyword>
<keyword id="KW-0863">Zinc-finger</keyword>
<proteinExistence type="inferred from homology"/>
<comment type="function">
    <text evidence="1">Participates actively in the response to hyperosmotic and heat shock by preventing the aggregation of stress-denatured proteins and by disaggregating proteins, also in an autonomous, DnaK-independent fashion. Unfolded proteins bind initially to DnaJ; upon interaction with the DnaJ-bound protein, DnaK hydrolyzes its bound ATP, resulting in the formation of a stable complex. GrpE releases ADP from DnaK; ATP binding to DnaK triggers the release of the substrate protein, thus completing the reaction cycle. Several rounds of ATP-dependent interactions between DnaJ, DnaK and GrpE are required for fully efficient folding. Also involved, together with DnaK and GrpE, in the DNA replication of plasmids through activation of initiation proteins.</text>
</comment>
<comment type="cofactor">
    <cofactor evidence="1">
        <name>Zn(2+)</name>
        <dbReference type="ChEBI" id="CHEBI:29105"/>
    </cofactor>
    <text evidence="1">Binds 2 Zn(2+) ions per monomer.</text>
</comment>
<comment type="subunit">
    <text evidence="1">Homodimer.</text>
</comment>
<comment type="subcellular location">
    <subcellularLocation>
        <location evidence="1">Cytoplasm</location>
    </subcellularLocation>
</comment>
<comment type="domain">
    <text evidence="1">The J domain is necessary and sufficient to stimulate DnaK ATPase activity. Zinc center 1 plays an important role in the autonomous, DnaK-independent chaperone activity of DnaJ. Zinc center 2 is essential for interaction with DnaK and for DnaJ activity.</text>
</comment>
<comment type="similarity">
    <text evidence="1">Belongs to the DnaJ family.</text>
</comment>
<organism>
    <name type="scientific">Polaromonas sp. (strain JS666 / ATCC BAA-500)</name>
    <dbReference type="NCBI Taxonomy" id="296591"/>
    <lineage>
        <taxon>Bacteria</taxon>
        <taxon>Pseudomonadati</taxon>
        <taxon>Pseudomonadota</taxon>
        <taxon>Betaproteobacteria</taxon>
        <taxon>Burkholderiales</taxon>
        <taxon>Comamonadaceae</taxon>
        <taxon>Polaromonas</taxon>
    </lineage>
</organism>